<dbReference type="EMBL" id="CP000872">
    <property type="protein sequence ID" value="ABX62969.1"/>
    <property type="molecule type" value="Genomic_DNA"/>
</dbReference>
<dbReference type="RefSeq" id="WP_002965003.1">
    <property type="nucleotide sequence ID" value="NC_010103.1"/>
</dbReference>
<dbReference type="SMR" id="A9M8S1"/>
<dbReference type="KEGG" id="bcs:BCAN_A1979"/>
<dbReference type="HOGENOM" id="CLU_089554_1_1_5"/>
<dbReference type="PhylomeDB" id="A9M8S1"/>
<dbReference type="Proteomes" id="UP000001385">
    <property type="component" value="Chromosome I"/>
</dbReference>
<dbReference type="GO" id="GO:0005886">
    <property type="term" value="C:plasma membrane"/>
    <property type="evidence" value="ECO:0007669"/>
    <property type="project" value="UniProtKB-SubCell"/>
</dbReference>
<dbReference type="HAMAP" id="MF_00189">
    <property type="entry name" value="YciB"/>
    <property type="match status" value="1"/>
</dbReference>
<dbReference type="InterPro" id="IPR006008">
    <property type="entry name" value="YciB"/>
</dbReference>
<dbReference type="NCBIfam" id="TIGR00997">
    <property type="entry name" value="ispZ"/>
    <property type="match status" value="1"/>
</dbReference>
<dbReference type="NCBIfam" id="NF001323">
    <property type="entry name" value="PRK00259.1-1"/>
    <property type="match status" value="1"/>
</dbReference>
<dbReference type="PANTHER" id="PTHR36917:SF1">
    <property type="entry name" value="INNER MEMBRANE-SPANNING PROTEIN YCIB"/>
    <property type="match status" value="1"/>
</dbReference>
<dbReference type="PANTHER" id="PTHR36917">
    <property type="entry name" value="INTRACELLULAR SEPTATION PROTEIN A-RELATED"/>
    <property type="match status" value="1"/>
</dbReference>
<dbReference type="Pfam" id="PF04279">
    <property type="entry name" value="IspA"/>
    <property type="match status" value="1"/>
</dbReference>
<comment type="function">
    <text evidence="1">Plays a role in cell envelope biogenesis, maintenance of cell envelope integrity and membrane homeostasis.</text>
</comment>
<comment type="subcellular location">
    <subcellularLocation>
        <location evidence="1">Cell inner membrane</location>
        <topology evidence="1">Multi-pass membrane protein</topology>
    </subcellularLocation>
</comment>
<comment type="similarity">
    <text evidence="1">Belongs to the YciB family.</text>
</comment>
<proteinExistence type="inferred from homology"/>
<gene>
    <name evidence="1" type="primary">yciB</name>
    <name type="ordered locus">BCAN_A1979</name>
</gene>
<protein>
    <recommendedName>
        <fullName evidence="1">Inner membrane-spanning protein YciB</fullName>
    </recommendedName>
</protein>
<name>YCIB_BRUC2</name>
<reference key="1">
    <citation type="submission" date="2007-10" db="EMBL/GenBank/DDBJ databases">
        <title>Brucella canis ATCC 23365 whole genome shotgun sequencing project.</title>
        <authorList>
            <person name="Setubal J.C."/>
            <person name="Bowns C."/>
            <person name="Boyle S."/>
            <person name="Crasta O.R."/>
            <person name="Czar M.J."/>
            <person name="Dharmanolla C."/>
            <person name="Gillespie J.J."/>
            <person name="Kenyon R.W."/>
            <person name="Lu J."/>
            <person name="Mane S."/>
            <person name="Mohapatra S."/>
            <person name="Nagrani S."/>
            <person name="Purkayastha A."/>
            <person name="Rajasimha H.K."/>
            <person name="Shallom J.M."/>
            <person name="Shallom S."/>
            <person name="Shukla M."/>
            <person name="Snyder E.E."/>
            <person name="Sobral B.W."/>
            <person name="Wattam A.R."/>
            <person name="Will R."/>
            <person name="Williams K."/>
            <person name="Yoo H."/>
            <person name="Bruce D."/>
            <person name="Detter C."/>
            <person name="Munk C."/>
            <person name="Brettin T.S."/>
        </authorList>
    </citation>
    <scope>NUCLEOTIDE SEQUENCE [LARGE SCALE GENOMIC DNA]</scope>
    <source>
        <strain>ATCC 23365 / NCTC 10854 / RM-666</strain>
    </source>
</reference>
<keyword id="KW-0997">Cell inner membrane</keyword>
<keyword id="KW-1003">Cell membrane</keyword>
<keyword id="KW-0472">Membrane</keyword>
<keyword id="KW-1185">Reference proteome</keyword>
<keyword id="KW-0812">Transmembrane</keyword>
<keyword id="KW-1133">Transmembrane helix</keyword>
<evidence type="ECO:0000255" key="1">
    <source>
        <dbReference type="HAMAP-Rule" id="MF_00189"/>
    </source>
</evidence>
<feature type="chain" id="PRO_1000077483" description="Inner membrane-spanning protein YciB">
    <location>
        <begin position="1"/>
        <end position="220"/>
    </location>
</feature>
<feature type="transmembrane region" description="Helical" evidence="1">
    <location>
        <begin position="20"/>
        <end position="40"/>
    </location>
</feature>
<feature type="transmembrane region" description="Helical" evidence="1">
    <location>
        <begin position="57"/>
        <end position="77"/>
    </location>
</feature>
<feature type="transmembrane region" description="Helical" evidence="1">
    <location>
        <begin position="86"/>
        <end position="106"/>
    </location>
</feature>
<feature type="transmembrane region" description="Helical" evidence="1">
    <location>
        <begin position="123"/>
        <end position="143"/>
    </location>
</feature>
<feature type="transmembrane region" description="Helical" evidence="1">
    <location>
        <begin position="156"/>
        <end position="176"/>
    </location>
</feature>
<feature type="transmembrane region" description="Helical" evidence="1">
    <location>
        <begin position="187"/>
        <end position="207"/>
    </location>
</feature>
<accession>A9M8S1</accession>
<organism>
    <name type="scientific">Brucella canis (strain ATCC 23365 / NCTC 10854 / RM-666)</name>
    <dbReference type="NCBI Taxonomy" id="483179"/>
    <lineage>
        <taxon>Bacteria</taxon>
        <taxon>Pseudomonadati</taxon>
        <taxon>Pseudomonadota</taxon>
        <taxon>Alphaproteobacteria</taxon>
        <taxon>Hyphomicrobiales</taxon>
        <taxon>Brucellaceae</taxon>
        <taxon>Brucella/Ochrobactrum group</taxon>
        <taxon>Brucella</taxon>
    </lineage>
</organism>
<sequence length="220" mass="24794">MEHPVFERDPSEKSETERREVPPLLKLALELGPLLVFFFANARGEMLIERFPILGSIGAPIFLATALFMAATVIALAISWSMTRTLPIMPLVSGIVVLVFGALTLWLHNDTFIKMKPTIVNTLFGGILLGGLFFGKSLLGYVFDSAFRLDAEGWRKLTLRWGLFFIFLAIVNEIVWRNFSTDTWVSFKVWGIMPITIVFTLLQMPLIQKHSLTDEENTAS</sequence>